<gene>
    <name evidence="7" type="primary">SWEET13</name>
    <name type="ordered locus">At5g50800</name>
    <name type="ORF">K7B16.1</name>
</gene>
<dbReference type="EMBL" id="AB025617">
    <property type="protein sequence ID" value="BAB08903.1"/>
    <property type="molecule type" value="Genomic_DNA"/>
</dbReference>
<dbReference type="EMBL" id="CP002688">
    <property type="protein sequence ID" value="AED95993.1"/>
    <property type="molecule type" value="Genomic_DNA"/>
</dbReference>
<dbReference type="EMBL" id="AY087516">
    <property type="protein sequence ID" value="AAM65058.1"/>
    <property type="molecule type" value="mRNA"/>
</dbReference>
<dbReference type="RefSeq" id="NP_199893.1">
    <property type="nucleotide sequence ID" value="NM_124458.2"/>
</dbReference>
<dbReference type="PDB" id="5XPD">
    <property type="method" value="X-ray"/>
    <property type="resolution" value="2.79 A"/>
    <property type="chains" value="A=1-222"/>
</dbReference>
<dbReference type="PDBsum" id="5XPD"/>
<dbReference type="SMR" id="Q9FGQ2"/>
<dbReference type="BioGRID" id="20398">
    <property type="interactions" value="8"/>
</dbReference>
<dbReference type="FunCoup" id="Q9FGQ2">
    <property type="interactions" value="781"/>
</dbReference>
<dbReference type="STRING" id="3702.Q9FGQ2"/>
<dbReference type="TCDB" id="2.A.123.1.26">
    <property type="family name" value="the sweet, pq-loop, saliva, mtn3 (sweet) family"/>
</dbReference>
<dbReference type="PaxDb" id="3702-AT5G50800.1"/>
<dbReference type="ProteomicsDB" id="226768"/>
<dbReference type="EnsemblPlants" id="AT5G50800.1">
    <property type="protein sequence ID" value="AT5G50800.1"/>
    <property type="gene ID" value="AT5G50800"/>
</dbReference>
<dbReference type="GeneID" id="835152"/>
<dbReference type="Gramene" id="AT5G50800.1">
    <property type="protein sequence ID" value="AT5G50800.1"/>
    <property type="gene ID" value="AT5G50800"/>
</dbReference>
<dbReference type="KEGG" id="ath:AT5G50800"/>
<dbReference type="Araport" id="AT5G50800"/>
<dbReference type="TAIR" id="AT5G50800">
    <property type="gene designation" value="SWEET13"/>
</dbReference>
<dbReference type="eggNOG" id="KOG1623">
    <property type="taxonomic scope" value="Eukaryota"/>
</dbReference>
<dbReference type="HOGENOM" id="CLU_048643_4_0_1"/>
<dbReference type="InParanoid" id="Q9FGQ2"/>
<dbReference type="OMA" id="FYIWATD"/>
<dbReference type="OrthoDB" id="409725at2759"/>
<dbReference type="PhylomeDB" id="Q9FGQ2"/>
<dbReference type="PRO" id="PR:Q9FGQ2"/>
<dbReference type="Proteomes" id="UP000006548">
    <property type="component" value="Chromosome 5"/>
</dbReference>
<dbReference type="ExpressionAtlas" id="Q9FGQ2">
    <property type="expression patterns" value="baseline and differential"/>
</dbReference>
<dbReference type="GO" id="GO:0005886">
    <property type="term" value="C:plasma membrane"/>
    <property type="evidence" value="ECO:0000314"/>
    <property type="project" value="TAIR"/>
</dbReference>
<dbReference type="GO" id="GO:1905201">
    <property type="term" value="F:gibberellin transmembrane transporter activity"/>
    <property type="evidence" value="ECO:0000314"/>
    <property type="project" value="TAIR"/>
</dbReference>
<dbReference type="GO" id="GO:0008515">
    <property type="term" value="F:sucrose transmembrane transporter activity"/>
    <property type="evidence" value="ECO:0000314"/>
    <property type="project" value="TAIR"/>
</dbReference>
<dbReference type="GO" id="GO:0051119">
    <property type="term" value="F:sugar transmembrane transporter activity"/>
    <property type="evidence" value="ECO:0000250"/>
    <property type="project" value="UniProtKB"/>
</dbReference>
<dbReference type="GO" id="GO:0009901">
    <property type="term" value="P:anther dehiscence"/>
    <property type="evidence" value="ECO:0000316"/>
    <property type="project" value="TAIR"/>
</dbReference>
<dbReference type="GO" id="GO:0052543">
    <property type="term" value="P:callose deposition in cell wall"/>
    <property type="evidence" value="ECO:0000316"/>
    <property type="project" value="TAIR"/>
</dbReference>
<dbReference type="GO" id="GO:1905200">
    <property type="term" value="P:gibberellic acid transmembrane transport"/>
    <property type="evidence" value="ECO:0000314"/>
    <property type="project" value="TAIR"/>
</dbReference>
<dbReference type="GO" id="GO:0009555">
    <property type="term" value="P:pollen development"/>
    <property type="evidence" value="ECO:0000316"/>
    <property type="project" value="TAIR"/>
</dbReference>
<dbReference type="GO" id="GO:0080112">
    <property type="term" value="P:seed growth"/>
    <property type="evidence" value="ECO:0000316"/>
    <property type="project" value="TAIR"/>
</dbReference>
<dbReference type="GO" id="GO:0015770">
    <property type="term" value="P:sucrose transport"/>
    <property type="evidence" value="ECO:0000314"/>
    <property type="project" value="TAIR"/>
</dbReference>
<dbReference type="FunFam" id="1.20.1280.290:FF:000001">
    <property type="entry name" value="Bidirectional sugar transporter SWEET"/>
    <property type="match status" value="1"/>
</dbReference>
<dbReference type="FunFam" id="1.20.1280.290:FF:000003">
    <property type="entry name" value="Bidirectional sugar transporter SWEET"/>
    <property type="match status" value="1"/>
</dbReference>
<dbReference type="Gene3D" id="1.20.1280.290">
    <property type="match status" value="2"/>
</dbReference>
<dbReference type="InterPro" id="IPR047664">
    <property type="entry name" value="SWEET"/>
</dbReference>
<dbReference type="InterPro" id="IPR004316">
    <property type="entry name" value="SWEET_rpt"/>
</dbReference>
<dbReference type="PANTHER" id="PTHR10791:SF210">
    <property type="entry name" value="BIDIRECTIONAL SUGAR TRANSPORTER SWEET13"/>
    <property type="match status" value="1"/>
</dbReference>
<dbReference type="PANTHER" id="PTHR10791">
    <property type="entry name" value="RAG1-ACTIVATING PROTEIN 1"/>
    <property type="match status" value="1"/>
</dbReference>
<dbReference type="Pfam" id="PF03083">
    <property type="entry name" value="MtN3_slv"/>
    <property type="match status" value="2"/>
</dbReference>
<keyword id="KW-0002">3D-structure</keyword>
<keyword id="KW-1003">Cell membrane</keyword>
<keyword id="KW-0472">Membrane</keyword>
<keyword id="KW-1185">Reference proteome</keyword>
<keyword id="KW-0677">Repeat</keyword>
<keyword id="KW-0762">Sugar transport</keyword>
<keyword id="KW-0812">Transmembrane</keyword>
<keyword id="KW-1133">Transmembrane helix</keyword>
<keyword id="KW-0813">Transport</keyword>
<proteinExistence type="evidence at protein level"/>
<comment type="function">
    <text evidence="5 8">Mediates both low-affinity uptake and efflux of sugar across the plasma membrane. Involved in nurturing the male gametophyte (PubMed:25988582).</text>
</comment>
<comment type="subunit">
    <text evidence="6">Forms heterooligomers with SWEET1, SWEET3, SWEET6, SWEET7, SWEET8, SWEET9, SWEET11 and SWEET17.</text>
</comment>
<comment type="subcellular location">
    <subcellularLocation>
        <location evidence="1">Cell membrane</location>
        <topology evidence="1">Multi-pass membrane protein</topology>
    </subcellularLocation>
</comment>
<comment type="tissue specificity">
    <text evidence="5">Expressed at low levels in leaves.</text>
</comment>
<comment type="induction">
    <text evidence="4">Slightly induced by the fungal pathogen B.cinerea.</text>
</comment>
<comment type="similarity">
    <text evidence="9">Belongs to the SWEET sugar transporter family.</text>
</comment>
<evidence type="ECO:0000250" key="1"/>
<evidence type="ECO:0000255" key="2"/>
<evidence type="ECO:0000256" key="3">
    <source>
        <dbReference type="SAM" id="MobiDB-lite"/>
    </source>
</evidence>
<evidence type="ECO:0000269" key="4">
    <source>
    </source>
</evidence>
<evidence type="ECO:0000269" key="5">
    <source>
    </source>
</evidence>
<evidence type="ECO:0000269" key="6">
    <source>
    </source>
</evidence>
<evidence type="ECO:0000303" key="7">
    <source>
    </source>
</evidence>
<evidence type="ECO:0000303" key="8">
    <source>
    </source>
</evidence>
<evidence type="ECO:0000305" key="9"/>
<evidence type="ECO:0007829" key="10">
    <source>
        <dbReference type="PDB" id="5XPD"/>
    </source>
</evidence>
<name>SWT13_ARATH</name>
<accession>Q9FGQ2</accession>
<accession>Q8LAZ2</accession>
<sequence>MALTNNLWAFVFGILGNIISFVVFLAPVPTFVRICKKKSTEGFQSLPYVSALFSAMLWIYYAMQKDGTAFLLITINAFGCVIETIYIVLFVSYANKKTRISTLKVLGLLNFLGFAAIVLVCELLTKGSTREKVLGGICVGFSVSVFAAPLSIMRVVVRTRSVEFMPFSLSLFLTISAVTWLFYGLAIKDFYVALPNVLGAFLGAVQMILYIIFKYYKTPVAQKTDKSKDVSDHSIDIAKLTTVIPGAVLDSAVHQPPALHNVPETKIQLTEVKSQNMTDPKDQINKDVQKQSQV</sequence>
<reference key="1">
    <citation type="submission" date="1999-04" db="EMBL/GenBank/DDBJ databases">
        <title>Structural analysis of Arabidopsis thaliana chromosome 5. XI.</title>
        <authorList>
            <person name="Kaneko T."/>
            <person name="Katoh T."/>
            <person name="Asamizu E."/>
            <person name="Sato S."/>
            <person name="Nakamura Y."/>
            <person name="Kotani H."/>
            <person name="Tabata S."/>
        </authorList>
    </citation>
    <scope>NUCLEOTIDE SEQUENCE [LARGE SCALE GENOMIC DNA]</scope>
    <source>
        <strain>cv. Columbia</strain>
    </source>
</reference>
<reference key="2">
    <citation type="journal article" date="2017" name="Plant J.">
        <title>Araport11: a complete reannotation of the Arabidopsis thaliana reference genome.</title>
        <authorList>
            <person name="Cheng C.Y."/>
            <person name="Krishnakumar V."/>
            <person name="Chan A.P."/>
            <person name="Thibaud-Nissen F."/>
            <person name="Schobel S."/>
            <person name="Town C.D."/>
        </authorList>
    </citation>
    <scope>GENOME REANNOTATION</scope>
    <source>
        <strain>cv. Columbia</strain>
    </source>
</reference>
<reference key="3">
    <citation type="submission" date="2002-03" db="EMBL/GenBank/DDBJ databases">
        <title>Full-length cDNA from Arabidopsis thaliana.</title>
        <authorList>
            <person name="Brover V.V."/>
            <person name="Troukhan M.E."/>
            <person name="Alexandrov N.A."/>
            <person name="Lu Y.-P."/>
            <person name="Flavell R.B."/>
            <person name="Feldmann K.A."/>
        </authorList>
    </citation>
    <scope>NUCLEOTIDE SEQUENCE [LARGE SCALE MRNA]</scope>
</reference>
<reference key="4">
    <citation type="journal article" date="2010" name="Nature">
        <title>Sugar transporters for intercellular exchange and nutrition of pathogens.</title>
        <authorList>
            <person name="Chen L.-Q."/>
            <person name="Hou B.-H."/>
            <person name="Lalonde S."/>
            <person name="Takanaga H."/>
            <person name="Hartung M.L."/>
            <person name="Qu X.-Q."/>
            <person name="Guo W.-J."/>
            <person name="Kim J.-G."/>
            <person name="Underwood W."/>
            <person name="Chaudhuri B."/>
            <person name="Chermak D."/>
            <person name="Antony G."/>
            <person name="White F.F."/>
            <person name="Somerville S.C."/>
            <person name="Mudgett M.B."/>
            <person name="Frommer W.B."/>
        </authorList>
    </citation>
    <scope>INDUCTION BY PATHOGENS</scope>
    <scope>GENE FAMILY</scope>
    <scope>NOMENCLATURE</scope>
    <source>
        <strain>cv. Columbia</strain>
    </source>
</reference>
<reference key="5">
    <citation type="journal article" date="2012" name="Science">
        <title>Sucrose efflux mediated by SWEET proteins as a key step for phloem transport.</title>
        <authorList>
            <person name="Chen L.-Q."/>
            <person name="Qu X.-Q."/>
            <person name="Hou B.-H."/>
            <person name="Sosso D."/>
            <person name="Osorio S."/>
            <person name="Fernie A.R."/>
            <person name="Frommer W.B."/>
        </authorList>
    </citation>
    <scope>FUNCTION</scope>
    <scope>TISSUE SPECIFICITY</scope>
</reference>
<reference key="6">
    <citation type="journal article" date="2013" name="Proc. Natl. Acad. Sci. U.S.A.">
        <title>Functional role of oligomerization for bacterial and plant SWEET sugar transporter family.</title>
        <authorList>
            <person name="Xuan Y.H."/>
            <person name="Hu Y.B."/>
            <person name="Chen L.-Q."/>
            <person name="Sosso D."/>
            <person name="Ducat D.C."/>
            <person name="Hou B.-H."/>
            <person name="Frommer W.B."/>
        </authorList>
    </citation>
    <scope>INTERACTION WITH SWEET1; SWEET3; SWEET6; SWEET7; SWEET8; SWEET9; SWEET11 AND SWEET17</scope>
</reference>
<reference key="7">
    <citation type="journal article" date="2015" name="Curr. Opin. Plant Biol.">
        <title>SWEETs, transporters for intracellular and intercellular sugar translocation.</title>
        <authorList>
            <person name="Eom J.-S."/>
            <person name="Chen L.-Q."/>
            <person name="Sosso D."/>
            <person name="Julius B.T."/>
            <person name="Lin I.W."/>
            <person name="Qu X.-Q."/>
            <person name="Braun D.M."/>
            <person name="Frommer W.B."/>
        </authorList>
    </citation>
    <scope>REVIEW</scope>
    <source>
        <strain>cv. Columbia</strain>
    </source>
</reference>
<organism>
    <name type="scientific">Arabidopsis thaliana</name>
    <name type="common">Mouse-ear cress</name>
    <dbReference type="NCBI Taxonomy" id="3702"/>
    <lineage>
        <taxon>Eukaryota</taxon>
        <taxon>Viridiplantae</taxon>
        <taxon>Streptophyta</taxon>
        <taxon>Embryophyta</taxon>
        <taxon>Tracheophyta</taxon>
        <taxon>Spermatophyta</taxon>
        <taxon>Magnoliopsida</taxon>
        <taxon>eudicotyledons</taxon>
        <taxon>Gunneridae</taxon>
        <taxon>Pentapetalae</taxon>
        <taxon>rosids</taxon>
        <taxon>malvids</taxon>
        <taxon>Brassicales</taxon>
        <taxon>Brassicaceae</taxon>
        <taxon>Camelineae</taxon>
        <taxon>Arabidopsis</taxon>
    </lineage>
</organism>
<feature type="chain" id="PRO_0000404113" description="Bidirectional sugar transporter SWEET13">
    <location>
        <begin position="1"/>
        <end position="294"/>
    </location>
</feature>
<feature type="topological domain" description="Extracellular" evidence="2">
    <location>
        <begin position="1"/>
        <end position="7"/>
    </location>
</feature>
<feature type="transmembrane region" description="Helical; Name=1" evidence="2">
    <location>
        <begin position="8"/>
        <end position="28"/>
    </location>
</feature>
<feature type="topological domain" description="Cytoplasmic" evidence="2">
    <location>
        <begin position="29"/>
        <end position="42"/>
    </location>
</feature>
<feature type="transmembrane region" description="Helical; Name=2" evidence="2">
    <location>
        <begin position="43"/>
        <end position="63"/>
    </location>
</feature>
<feature type="topological domain" description="Extracellular" evidence="2">
    <location>
        <begin position="64"/>
        <end position="69"/>
    </location>
</feature>
<feature type="transmembrane region" description="Helical; Name=3" evidence="2">
    <location>
        <begin position="70"/>
        <end position="90"/>
    </location>
</feature>
<feature type="topological domain" description="Cytoplasmic" evidence="2">
    <location>
        <begin position="91"/>
        <end position="104"/>
    </location>
</feature>
<feature type="transmembrane region" description="Helical; Name=4" evidence="2">
    <location>
        <begin position="105"/>
        <end position="125"/>
    </location>
</feature>
<feature type="topological domain" description="Extracellular" evidence="2">
    <location>
        <begin position="126"/>
        <end position="132"/>
    </location>
</feature>
<feature type="transmembrane region" description="Helical; Name=5" evidence="2">
    <location>
        <begin position="133"/>
        <end position="153"/>
    </location>
</feature>
<feature type="topological domain" description="Cytoplasmic" evidence="2">
    <location>
        <begin position="154"/>
        <end position="166"/>
    </location>
</feature>
<feature type="transmembrane region" description="Helical; Name=6" evidence="2">
    <location>
        <begin position="167"/>
        <end position="187"/>
    </location>
</feature>
<feature type="topological domain" description="Extracellular" evidence="2">
    <location>
        <begin position="188"/>
        <end position="192"/>
    </location>
</feature>
<feature type="transmembrane region" description="Helical; Name=7" evidence="2">
    <location>
        <begin position="193"/>
        <end position="213"/>
    </location>
</feature>
<feature type="topological domain" description="Cytoplasmic" evidence="2">
    <location>
        <begin position="214"/>
        <end position="294"/>
    </location>
</feature>
<feature type="domain" description="MtN3/slv 1">
    <location>
        <begin position="10"/>
        <end position="97"/>
    </location>
</feature>
<feature type="domain" description="MtN3/slv 2">
    <location>
        <begin position="133"/>
        <end position="216"/>
    </location>
</feature>
<feature type="region of interest" description="Disordered" evidence="3">
    <location>
        <begin position="273"/>
        <end position="294"/>
    </location>
</feature>
<feature type="compositionally biased region" description="Basic and acidic residues" evidence="3">
    <location>
        <begin position="279"/>
        <end position="294"/>
    </location>
</feature>
<feature type="sequence conflict" description="In Ref. 3; AAM65058." evidence="9" ref="3">
    <original>E</original>
    <variation>Z</variation>
    <location>
        <position position="122"/>
    </location>
</feature>
<feature type="helix" evidence="10">
    <location>
        <begin position="7"/>
        <end position="24"/>
    </location>
</feature>
<feature type="turn" evidence="10">
    <location>
        <begin position="25"/>
        <end position="27"/>
    </location>
</feature>
<feature type="helix" evidence="10">
    <location>
        <begin position="28"/>
        <end position="37"/>
    </location>
</feature>
<feature type="helix" evidence="10">
    <location>
        <begin position="46"/>
        <end position="65"/>
    </location>
</feature>
<feature type="helix" evidence="10">
    <location>
        <begin position="68"/>
        <end position="70"/>
    </location>
</feature>
<feature type="helix" evidence="10">
    <location>
        <begin position="71"/>
        <end position="92"/>
    </location>
</feature>
<feature type="helix" evidence="10">
    <location>
        <begin position="96"/>
        <end position="108"/>
    </location>
</feature>
<feature type="turn" evidence="10">
    <location>
        <begin position="109"/>
        <end position="111"/>
    </location>
</feature>
<feature type="helix" evidence="10">
    <location>
        <begin position="112"/>
        <end position="124"/>
    </location>
</feature>
<feature type="helix" evidence="10">
    <location>
        <begin position="127"/>
        <end position="144"/>
    </location>
</feature>
<feature type="helix" evidence="10">
    <location>
        <begin position="147"/>
        <end position="159"/>
    </location>
</feature>
<feature type="helix" evidence="10">
    <location>
        <begin position="167"/>
        <end position="186"/>
    </location>
</feature>
<feature type="helix" evidence="10">
    <location>
        <begin position="190"/>
        <end position="213"/>
    </location>
</feature>
<feature type="helix" evidence="10">
    <location>
        <begin position="220"/>
        <end position="222"/>
    </location>
</feature>
<protein>
    <recommendedName>
        <fullName evidence="7">Bidirectional sugar transporter SWEET13</fullName>
        <shortName evidence="7">AtSWEET13</shortName>
    </recommendedName>
    <alternativeName>
        <fullName evidence="7">Protein SUGARS WILL EVENTUALLY BE EXPORTED TRANSPORTERS 13</fullName>
    </alternativeName>
</protein>